<name>GT3_ORYSJ</name>
<keyword id="KW-0325">Glycoprotein</keyword>
<keyword id="KW-0328">Glycosyltransferase</keyword>
<keyword id="KW-0333">Golgi apparatus</keyword>
<keyword id="KW-0472">Membrane</keyword>
<keyword id="KW-1185">Reference proteome</keyword>
<keyword id="KW-0735">Signal-anchor</keyword>
<keyword id="KW-0808">Transferase</keyword>
<keyword id="KW-0812">Transmembrane</keyword>
<keyword id="KW-1133">Transmembrane helix</keyword>
<organism>
    <name type="scientific">Oryza sativa subsp. japonica</name>
    <name type="common">Rice</name>
    <dbReference type="NCBI Taxonomy" id="39947"/>
    <lineage>
        <taxon>Eukaryota</taxon>
        <taxon>Viridiplantae</taxon>
        <taxon>Streptophyta</taxon>
        <taxon>Embryophyta</taxon>
        <taxon>Tracheophyta</taxon>
        <taxon>Spermatophyta</taxon>
        <taxon>Magnoliopsida</taxon>
        <taxon>Liliopsida</taxon>
        <taxon>Poales</taxon>
        <taxon>Poaceae</taxon>
        <taxon>BOP clade</taxon>
        <taxon>Oryzoideae</taxon>
        <taxon>Oryzeae</taxon>
        <taxon>Oryzinae</taxon>
        <taxon>Oryza</taxon>
        <taxon>Oryza sativa</taxon>
    </lineage>
</organism>
<comment type="function">
    <text evidence="1">Probable glycosyltransferase that may be involved in the biosynthesis of xyloglucan.</text>
</comment>
<comment type="subcellular location">
    <subcellularLocation>
        <location evidence="6">Golgi apparatus membrane</location>
        <topology evidence="6">Single-pass type II membrane protein</topology>
    </subcellularLocation>
</comment>
<comment type="similarity">
    <text evidence="6">Belongs to the glycosyltransferase 34 family.</text>
</comment>
<evidence type="ECO:0000250" key="1">
    <source>
        <dbReference type="UniProtKB" id="Q10MQ0"/>
    </source>
</evidence>
<evidence type="ECO:0000255" key="2"/>
<evidence type="ECO:0000255" key="3">
    <source>
        <dbReference type="PROSITE-ProRule" id="PRU00498"/>
    </source>
</evidence>
<evidence type="ECO:0000256" key="4">
    <source>
        <dbReference type="SAM" id="MobiDB-lite"/>
    </source>
</evidence>
<evidence type="ECO:0000303" key="5">
    <source>
    </source>
</evidence>
<evidence type="ECO:0000305" key="6"/>
<evidence type="ECO:0000312" key="7">
    <source>
        <dbReference type="EMBL" id="ABA95806.1"/>
    </source>
</evidence>
<evidence type="ECO:0000312" key="8">
    <source>
        <dbReference type="EMBL" id="BAF29179.1"/>
    </source>
</evidence>
<evidence type="ECO:0000312" key="9">
    <source>
        <dbReference type="EMBL" id="EAZ19653.1"/>
    </source>
</evidence>
<feature type="chain" id="PRO_0000434327" description="Probable glycosyltransferase 3">
    <location>
        <begin position="1"/>
        <end position="463"/>
    </location>
</feature>
<feature type="topological domain" description="Cytoplasmic" evidence="6">
    <location>
        <begin position="1"/>
        <end position="24"/>
    </location>
</feature>
<feature type="transmembrane region" description="Helical; Signal-anchor for type II membrane protein" evidence="2">
    <location>
        <begin position="25"/>
        <end position="47"/>
    </location>
</feature>
<feature type="topological domain" description="Lumenal" evidence="6">
    <location>
        <begin position="48"/>
        <end position="463"/>
    </location>
</feature>
<feature type="region of interest" description="Disordered" evidence="4">
    <location>
        <begin position="82"/>
        <end position="125"/>
    </location>
</feature>
<feature type="compositionally biased region" description="Acidic residues" evidence="4">
    <location>
        <begin position="87"/>
        <end position="99"/>
    </location>
</feature>
<feature type="compositionally biased region" description="Low complexity" evidence="4">
    <location>
        <begin position="103"/>
        <end position="118"/>
    </location>
</feature>
<feature type="glycosylation site" description="N-linked (GlcNAc...) asparagine" evidence="3">
    <location>
        <position position="110"/>
    </location>
</feature>
<feature type="glycosylation site" description="N-linked (GlcNAc...) asparagine" evidence="3">
    <location>
        <position position="125"/>
    </location>
</feature>
<feature type="glycosylation site" description="N-linked (GlcNAc...) asparagine" evidence="3">
    <location>
        <position position="442"/>
    </location>
</feature>
<gene>
    <name evidence="5" type="primary">GT3</name>
    <name evidence="8" type="ordered locus">Os12g0149300</name>
    <name evidence="7" type="ordered locus">LOC_Os12g05380</name>
    <name evidence="9" type="ORF">OsJ_35230</name>
</gene>
<accession>Q2QXP0</accession>
<proteinExistence type="evidence at transcript level"/>
<sequence>MAVTGGGRPAVRQQAARGKQMQRTFNNVKITLICGFITLLVLRGTVGINLLTYGVGGGGGSDAVAAAEEARVVEDIERILREIRSDTDDDDDDEEEEPLGVDASTTTTTNSTTTTATAARRRSSNHTYTLGPKVTRWNAKRRQWLSRNPGFPSRDARGKPRILLVTGSQPAPCDDAAGDHYLLKATKNKIDYCRIHGIEIVHSMAHLDRELAGYWAKLPLLRRLMLSHPEVEWVWWMDSDALFTDMAFELPLARYDTSNLVIHGYPELLFAKRSWIALNTGSFLLRNCQWSLELLDAWAPMGPKGRVRDEAGKVLTASLTGRPAFEADDQSALIHILLTQKERWMEKVYVEDKYFLHGFWAGLVDKYEEMMERHHPGLGDERWPFVTHFVGCKPCGGYGDYPRERCLGGMERAFNFADNQVLRLYGFRHRSLASARVRRVANRTDNPLVNKEAALKMDAKIES</sequence>
<reference key="1">
    <citation type="journal article" date="2005" name="BMC Biol.">
        <title>The sequence of rice chromosomes 11 and 12, rich in disease resistance genes and recent gene duplications.</title>
        <authorList>
            <consortium name="The rice chromosomes 11 and 12 sequencing consortia"/>
        </authorList>
    </citation>
    <scope>NUCLEOTIDE SEQUENCE [LARGE SCALE GENOMIC DNA]</scope>
    <source>
        <strain>cv. Nipponbare</strain>
    </source>
</reference>
<reference key="2">
    <citation type="journal article" date="2005" name="Nature">
        <title>The map-based sequence of the rice genome.</title>
        <authorList>
            <consortium name="International rice genome sequencing project (IRGSP)"/>
        </authorList>
    </citation>
    <scope>NUCLEOTIDE SEQUENCE [LARGE SCALE GENOMIC DNA]</scope>
    <source>
        <strain>cv. Nipponbare</strain>
    </source>
</reference>
<reference key="3">
    <citation type="journal article" date="2008" name="Nucleic Acids Res.">
        <title>The rice annotation project database (RAP-DB): 2008 update.</title>
        <authorList>
            <consortium name="The rice annotation project (RAP)"/>
        </authorList>
    </citation>
    <scope>GENOME REANNOTATION</scope>
    <source>
        <strain>cv. Nipponbare</strain>
    </source>
</reference>
<reference key="4">
    <citation type="journal article" date="2013" name="Rice">
        <title>Improvement of the Oryza sativa Nipponbare reference genome using next generation sequence and optical map data.</title>
        <authorList>
            <person name="Kawahara Y."/>
            <person name="de la Bastide M."/>
            <person name="Hamilton J.P."/>
            <person name="Kanamori H."/>
            <person name="McCombie W.R."/>
            <person name="Ouyang S."/>
            <person name="Schwartz D.C."/>
            <person name="Tanaka T."/>
            <person name="Wu J."/>
            <person name="Zhou S."/>
            <person name="Childs K.L."/>
            <person name="Davidson R.M."/>
            <person name="Lin H."/>
            <person name="Quesada-Ocampo L."/>
            <person name="Vaillancourt B."/>
            <person name="Sakai H."/>
            <person name="Lee S.S."/>
            <person name="Kim J."/>
            <person name="Numa H."/>
            <person name="Itoh T."/>
            <person name="Buell C.R."/>
            <person name="Matsumoto T."/>
        </authorList>
    </citation>
    <scope>GENOME REANNOTATION</scope>
    <source>
        <strain>cv. Nipponbare</strain>
    </source>
</reference>
<reference key="5">
    <citation type="journal article" date="2005" name="PLoS Biol.">
        <title>The genomes of Oryza sativa: a history of duplications.</title>
        <authorList>
            <person name="Yu J."/>
            <person name="Wang J."/>
            <person name="Lin W."/>
            <person name="Li S."/>
            <person name="Li H."/>
            <person name="Zhou J."/>
            <person name="Ni P."/>
            <person name="Dong W."/>
            <person name="Hu S."/>
            <person name="Zeng C."/>
            <person name="Zhang J."/>
            <person name="Zhang Y."/>
            <person name="Li R."/>
            <person name="Xu Z."/>
            <person name="Li S."/>
            <person name="Li X."/>
            <person name="Zheng H."/>
            <person name="Cong L."/>
            <person name="Lin L."/>
            <person name="Yin J."/>
            <person name="Geng J."/>
            <person name="Li G."/>
            <person name="Shi J."/>
            <person name="Liu J."/>
            <person name="Lv H."/>
            <person name="Li J."/>
            <person name="Wang J."/>
            <person name="Deng Y."/>
            <person name="Ran L."/>
            <person name="Shi X."/>
            <person name="Wang X."/>
            <person name="Wu Q."/>
            <person name="Li C."/>
            <person name="Ren X."/>
            <person name="Wang J."/>
            <person name="Wang X."/>
            <person name="Li D."/>
            <person name="Liu D."/>
            <person name="Zhang X."/>
            <person name="Ji Z."/>
            <person name="Zhao W."/>
            <person name="Sun Y."/>
            <person name="Zhang Z."/>
            <person name="Bao J."/>
            <person name="Han Y."/>
            <person name="Dong L."/>
            <person name="Ji J."/>
            <person name="Chen P."/>
            <person name="Wu S."/>
            <person name="Liu J."/>
            <person name="Xiao Y."/>
            <person name="Bu D."/>
            <person name="Tan J."/>
            <person name="Yang L."/>
            <person name="Ye C."/>
            <person name="Zhang J."/>
            <person name="Xu J."/>
            <person name="Zhou Y."/>
            <person name="Yu Y."/>
            <person name="Zhang B."/>
            <person name="Zhuang S."/>
            <person name="Wei H."/>
            <person name="Liu B."/>
            <person name="Lei M."/>
            <person name="Yu H."/>
            <person name="Li Y."/>
            <person name="Xu H."/>
            <person name="Wei S."/>
            <person name="He X."/>
            <person name="Fang L."/>
            <person name="Zhang Z."/>
            <person name="Zhang Y."/>
            <person name="Huang X."/>
            <person name="Su Z."/>
            <person name="Tong W."/>
            <person name="Li J."/>
            <person name="Tong Z."/>
            <person name="Li S."/>
            <person name="Ye J."/>
            <person name="Wang L."/>
            <person name="Fang L."/>
            <person name="Lei T."/>
            <person name="Chen C.-S."/>
            <person name="Chen H.-C."/>
            <person name="Xu Z."/>
            <person name="Li H."/>
            <person name="Huang H."/>
            <person name="Zhang F."/>
            <person name="Xu H."/>
            <person name="Li N."/>
            <person name="Zhao C."/>
            <person name="Li S."/>
            <person name="Dong L."/>
            <person name="Huang Y."/>
            <person name="Li L."/>
            <person name="Xi Y."/>
            <person name="Qi Q."/>
            <person name="Li W."/>
            <person name="Zhang B."/>
            <person name="Hu W."/>
            <person name="Zhang Y."/>
            <person name="Tian X."/>
            <person name="Jiao Y."/>
            <person name="Liang X."/>
            <person name="Jin J."/>
            <person name="Gao L."/>
            <person name="Zheng W."/>
            <person name="Hao B."/>
            <person name="Liu S.-M."/>
            <person name="Wang W."/>
            <person name="Yuan L."/>
            <person name="Cao M."/>
            <person name="McDermott J."/>
            <person name="Samudrala R."/>
            <person name="Wang J."/>
            <person name="Wong G.K.-S."/>
            <person name="Yang H."/>
        </authorList>
    </citation>
    <scope>NUCLEOTIDE SEQUENCE [LARGE SCALE GENOMIC DNA]</scope>
    <source>
        <strain>cv. Nipponbare</strain>
    </source>
</reference>
<reference key="6">
    <citation type="journal article" date="2003" name="Science">
        <title>Collection, mapping, and annotation of over 28,000 cDNA clones from japonica rice.</title>
        <authorList>
            <consortium name="The rice full-length cDNA consortium"/>
        </authorList>
    </citation>
    <scope>NUCLEOTIDE SEQUENCE [LARGE SCALE MRNA]</scope>
    <source>
        <strain>cv. Nipponbare</strain>
    </source>
</reference>
<reference key="7">
    <citation type="journal article" date="2014" name="J. Exp. Bot.">
        <title>Mutation in xyloglucan 6-xylosytransferase results in abnormal root hair development in Oryza sativa.</title>
        <authorList>
            <person name="Wang C."/>
            <person name="Li S."/>
            <person name="Ng S."/>
            <person name="Zhang B."/>
            <person name="Zhou Y."/>
            <person name="Whelan J."/>
            <person name="Wu P."/>
            <person name="Shou H."/>
        </authorList>
    </citation>
    <scope>NOMENCLATURE</scope>
</reference>
<protein>
    <recommendedName>
        <fullName evidence="6">Probable glycosyltransferase 3</fullName>
        <shortName evidence="5">OsGT3</shortName>
        <ecNumber evidence="6">2.4.-.-</ecNumber>
    </recommendedName>
</protein>
<dbReference type="EC" id="2.4.-.-" evidence="6"/>
<dbReference type="EMBL" id="DP000011">
    <property type="protein sequence ID" value="ABA95806.1"/>
    <property type="molecule type" value="Genomic_DNA"/>
</dbReference>
<dbReference type="EMBL" id="AP008218">
    <property type="protein sequence ID" value="BAF29179.1"/>
    <property type="molecule type" value="Genomic_DNA"/>
</dbReference>
<dbReference type="EMBL" id="AP014968">
    <property type="status" value="NOT_ANNOTATED_CDS"/>
    <property type="molecule type" value="Genomic_DNA"/>
</dbReference>
<dbReference type="EMBL" id="CM000149">
    <property type="protein sequence ID" value="EAZ19653.1"/>
    <property type="molecule type" value="Genomic_DNA"/>
</dbReference>
<dbReference type="EMBL" id="AK110842">
    <property type="protein sequence ID" value="BAG99053.1"/>
    <property type="molecule type" value="mRNA"/>
</dbReference>
<dbReference type="RefSeq" id="XP_015618723.1">
    <property type="nucleotide sequence ID" value="XM_015763237.1"/>
</dbReference>
<dbReference type="SMR" id="Q2QXP0"/>
<dbReference type="FunCoup" id="Q2QXP0">
    <property type="interactions" value="3"/>
</dbReference>
<dbReference type="STRING" id="39947.Q2QXP0"/>
<dbReference type="CAZy" id="GT34">
    <property type="family name" value="Glycosyltransferase Family 34"/>
</dbReference>
<dbReference type="GlyCosmos" id="Q2QXP0">
    <property type="glycosylation" value="3 sites, No reported glycans"/>
</dbReference>
<dbReference type="PaxDb" id="39947-Q2QXP0"/>
<dbReference type="KEGG" id="dosa:Os12g0149300"/>
<dbReference type="eggNOG" id="KOG4748">
    <property type="taxonomic scope" value="Eukaryota"/>
</dbReference>
<dbReference type="HOGENOM" id="CLU_034328_1_0_1"/>
<dbReference type="InParanoid" id="Q2QXP0"/>
<dbReference type="OrthoDB" id="205108at2759"/>
<dbReference type="PlantReactome" id="R-OSA-5655101">
    <property type="pathway name" value="Xyloglucan biosynthesis"/>
</dbReference>
<dbReference type="Proteomes" id="UP000000763">
    <property type="component" value="Chromosome 12"/>
</dbReference>
<dbReference type="Proteomes" id="UP000007752">
    <property type="component" value="Chromosome 12"/>
</dbReference>
<dbReference type="Proteomes" id="UP000059680">
    <property type="component" value="Chromosome 12"/>
</dbReference>
<dbReference type="GO" id="GO:0000139">
    <property type="term" value="C:Golgi membrane"/>
    <property type="evidence" value="ECO:0007669"/>
    <property type="project" value="UniProtKB-SubCell"/>
</dbReference>
<dbReference type="GO" id="GO:0016758">
    <property type="term" value="F:hexosyltransferase activity"/>
    <property type="evidence" value="ECO:0000318"/>
    <property type="project" value="GO_Central"/>
</dbReference>
<dbReference type="GO" id="GO:0009969">
    <property type="term" value="P:xyloglucan biosynthetic process"/>
    <property type="evidence" value="ECO:0000318"/>
    <property type="project" value="GO_Central"/>
</dbReference>
<dbReference type="FunFam" id="3.90.550.10:FF:000032">
    <property type="entry name" value="xyloglucan 6-xylosyltransferase 2"/>
    <property type="match status" value="1"/>
</dbReference>
<dbReference type="Gene3D" id="3.90.550.10">
    <property type="entry name" value="Spore Coat Polysaccharide Biosynthesis Protein SpsA, Chain A"/>
    <property type="match status" value="1"/>
</dbReference>
<dbReference type="InterPro" id="IPR008630">
    <property type="entry name" value="Glyco_trans_34"/>
</dbReference>
<dbReference type="InterPro" id="IPR029044">
    <property type="entry name" value="Nucleotide-diphossugar_trans"/>
</dbReference>
<dbReference type="PANTHER" id="PTHR31311:SF8">
    <property type="entry name" value="GLYCOSYLTRANSFERASE 3-RELATED"/>
    <property type="match status" value="1"/>
</dbReference>
<dbReference type="PANTHER" id="PTHR31311">
    <property type="entry name" value="XYLOGLUCAN 6-XYLOSYLTRANSFERASE 5-RELATED-RELATED"/>
    <property type="match status" value="1"/>
</dbReference>
<dbReference type="Pfam" id="PF05637">
    <property type="entry name" value="Glyco_transf_34"/>
    <property type="match status" value="1"/>
</dbReference>